<name>CAPS1_PFV1</name>
<sequence>MSVVTTRARIAETLTEKHTLGIEKVVATDSWRVGITSREKKLGRINISAEISRKIQDEAIAYARNKGIPYLPGINGIAWKLLRLKWLGYTDQINVVMRTVPAEWRDFLTQIMENIQMESMYSELRKVRV</sequence>
<comment type="function">
    <text evidence="1">Self-assembles to form a helical, filamentous nucleocapsid mesuring 400 nm in length and 20 nm in width. Together with capsid protein 2, wraps arounds the DNA and maintains it in an A-form. Capsid proteins probably maintain the DNA in A-form by non-specific desolvation and specific coordination of the DNA phosphate groups by positively charged residues. This certainly protects the viral DNA under conditions such as the extreme desiccation of its host.</text>
</comment>
<comment type="subunit">
    <text evidence="1">Heterodimer composed of major capsid protein 1 and major capsid protein 2.</text>
</comment>
<comment type="subcellular location">
    <subcellularLocation>
        <location evidence="2">Virion</location>
    </subcellularLocation>
</comment>
<feature type="chain" id="PRO_0000453809" description="Major capsid protein 1">
    <location>
        <begin position="1"/>
        <end position="129"/>
    </location>
</feature>
<dbReference type="EMBL" id="KU307456">
    <property type="protein sequence ID" value="AML61166.1"/>
    <property type="molecule type" value="Genomic_DNA"/>
</dbReference>
<dbReference type="RefSeq" id="YP_009237236.1">
    <property type="nucleotide sequence ID" value="NC_029548.1"/>
</dbReference>
<dbReference type="EMDB" id="EMD-21094"/>
<dbReference type="SMR" id="A0A140F3K6"/>
<dbReference type="GeneID" id="30313572"/>
<dbReference type="KEGG" id="vg:30313572"/>
<dbReference type="Proteomes" id="UP000202991">
    <property type="component" value="Segment"/>
</dbReference>
<dbReference type="GO" id="GO:0044423">
    <property type="term" value="C:virion component"/>
    <property type="evidence" value="ECO:0007669"/>
    <property type="project" value="UniProtKB-KW"/>
</dbReference>
<reference key="1">
    <citation type="journal article" date="2016" name="Proc. Natl. Acad. Sci. U.S.A.">
        <title>A virus of hyperthermophilic archaea with a unique architecture among DNA viruses.</title>
        <authorList>
            <person name="Rensen E.I."/>
            <person name="Mochizuki T."/>
            <person name="Quemin E."/>
            <person name="Schouten S."/>
            <person name="Krupovic M."/>
            <person name="Prangishvili D."/>
        </authorList>
    </citation>
    <scope>NUCLEOTIDE SEQUENCE [LARGE SCALE GENOMIC DNA]</scope>
    <scope>SUBCELLULAR LOCATION</scope>
    <source>
        <strain evidence="4">1</strain>
    </source>
</reference>
<evidence type="ECO:0000250" key="1">
    <source>
        <dbReference type="UniProtKB" id="A0A6M3VZT9"/>
    </source>
</evidence>
<evidence type="ECO:0000269" key="2">
    <source>
    </source>
</evidence>
<evidence type="ECO:0000303" key="3">
    <source>
    </source>
</evidence>
<evidence type="ECO:0000312" key="4">
    <source>
        <dbReference type="EMBL" id="AML61166.1"/>
    </source>
</evidence>
<proteinExistence type="inferred from homology"/>
<keyword id="KW-0946">Virion</keyword>
<accession>A0A140F3K6</accession>
<organism>
    <name type="scientific">Pyrobaculum filamentous virus 1</name>
    <name type="common">PFV1</name>
    <dbReference type="NCBI Taxonomy" id="1805492"/>
    <lineage>
        <taxon>Viruses</taxon>
        <taxon>Adnaviria</taxon>
        <taxon>Zilligvirae</taxon>
        <taxon>Taleaviricota</taxon>
        <taxon>Tokiviricetes</taxon>
        <taxon>Primavirales</taxon>
        <taxon>Tristromaviridae</taxon>
        <taxon>Alphatristromavirus</taxon>
        <taxon>Alphatristromavirus pozzuoliense</taxon>
    </lineage>
</organism>
<protein>
    <recommendedName>
        <fullName evidence="1">Major capsid protein 1</fullName>
    </recommendedName>
    <alternativeName>
        <fullName evidence="1">MCP1</fullName>
    </alternativeName>
    <alternativeName>
        <fullName evidence="3">Major capsid protein VP1</fullName>
    </alternativeName>
</protein>